<name>TIG_SHEPC</name>
<feature type="chain" id="PRO_1000022757" description="Trigger factor">
    <location>
        <begin position="1"/>
        <end position="434"/>
    </location>
</feature>
<feature type="domain" description="PPIase FKBP-type" evidence="1">
    <location>
        <begin position="160"/>
        <end position="245"/>
    </location>
</feature>
<organism>
    <name type="scientific">Shewanella putrefaciens (strain CN-32 / ATCC BAA-453)</name>
    <dbReference type="NCBI Taxonomy" id="319224"/>
    <lineage>
        <taxon>Bacteria</taxon>
        <taxon>Pseudomonadati</taxon>
        <taxon>Pseudomonadota</taxon>
        <taxon>Gammaproteobacteria</taxon>
        <taxon>Alteromonadales</taxon>
        <taxon>Shewanellaceae</taxon>
        <taxon>Shewanella</taxon>
    </lineage>
</organism>
<sequence length="434" mass="47759">MQVSVEATQGLERRLTISVPAEQIEKLVKDSLQREAKRARIPGFRPGKVPVTVINKRYGAAIRQDITGEVMQRNFIEAIIAEKLNPAGAPTFIPGSTDSEKFEFVATFEIYPEVELKGLDAIEVEQPKASVTDADVDSMIETLRKQHATYAAVEREAADGDKVKMNFVGSVDGEEFEGGKAEDFELQLGSGRMIPGFEAGILGHKAGEEFVIDVNFPEEYHAENLKGKAAKFAITLTEVQAANLPEVNDEFAALFGINEGGLEALKTEIRKNMNRELEQALKANVKEQVIAGLLANNDIELPKALIDGEVNVLRQQAMQRFGGQTANMPELPAELFTEQAARRVKIGLLLGEVIKTNELKAEDERVQGLIASMASAYEDPSEVIAYYNSNKELMQNMRNVALEEQAVEALLKSAKVTEKEVAFEEFMNKATGRA</sequence>
<comment type="function">
    <text evidence="1">Involved in protein export. Acts as a chaperone by maintaining the newly synthesized protein in an open conformation. Functions as a peptidyl-prolyl cis-trans isomerase.</text>
</comment>
<comment type="catalytic activity">
    <reaction evidence="1">
        <text>[protein]-peptidylproline (omega=180) = [protein]-peptidylproline (omega=0)</text>
        <dbReference type="Rhea" id="RHEA:16237"/>
        <dbReference type="Rhea" id="RHEA-COMP:10747"/>
        <dbReference type="Rhea" id="RHEA-COMP:10748"/>
        <dbReference type="ChEBI" id="CHEBI:83833"/>
        <dbReference type="ChEBI" id="CHEBI:83834"/>
        <dbReference type="EC" id="5.2.1.8"/>
    </reaction>
</comment>
<comment type="subcellular location">
    <subcellularLocation>
        <location>Cytoplasm</location>
    </subcellularLocation>
    <text evidence="1">About half TF is bound to the ribosome near the polypeptide exit tunnel while the other half is free in the cytoplasm.</text>
</comment>
<comment type="domain">
    <text evidence="1">Consists of 3 domains; the N-terminus binds the ribosome, the middle domain has PPIase activity, while the C-terminus has intrinsic chaperone activity on its own.</text>
</comment>
<comment type="similarity">
    <text evidence="1">Belongs to the FKBP-type PPIase family. Tig subfamily.</text>
</comment>
<keyword id="KW-0131">Cell cycle</keyword>
<keyword id="KW-0132">Cell division</keyword>
<keyword id="KW-0143">Chaperone</keyword>
<keyword id="KW-0963">Cytoplasm</keyword>
<keyword id="KW-0413">Isomerase</keyword>
<keyword id="KW-0697">Rotamase</keyword>
<gene>
    <name evidence="1" type="primary">tig</name>
    <name type="ordered locus">Sputcn32_1489</name>
</gene>
<accession>A4Y5I1</accession>
<protein>
    <recommendedName>
        <fullName evidence="1">Trigger factor</fullName>
        <shortName evidence="1">TF</shortName>
        <ecNumber evidence="1">5.2.1.8</ecNumber>
    </recommendedName>
    <alternativeName>
        <fullName evidence="1">PPIase</fullName>
    </alternativeName>
</protein>
<evidence type="ECO:0000255" key="1">
    <source>
        <dbReference type="HAMAP-Rule" id="MF_00303"/>
    </source>
</evidence>
<proteinExistence type="inferred from homology"/>
<reference key="1">
    <citation type="submission" date="2007-04" db="EMBL/GenBank/DDBJ databases">
        <title>Complete sequence of Shewanella putrefaciens CN-32.</title>
        <authorList>
            <consortium name="US DOE Joint Genome Institute"/>
            <person name="Copeland A."/>
            <person name="Lucas S."/>
            <person name="Lapidus A."/>
            <person name="Barry K."/>
            <person name="Detter J.C."/>
            <person name="Glavina del Rio T."/>
            <person name="Hammon N."/>
            <person name="Israni S."/>
            <person name="Dalin E."/>
            <person name="Tice H."/>
            <person name="Pitluck S."/>
            <person name="Chain P."/>
            <person name="Malfatti S."/>
            <person name="Shin M."/>
            <person name="Vergez L."/>
            <person name="Schmutz J."/>
            <person name="Larimer F."/>
            <person name="Land M."/>
            <person name="Hauser L."/>
            <person name="Kyrpides N."/>
            <person name="Mikhailova N."/>
            <person name="Romine M.F."/>
            <person name="Fredrickson J."/>
            <person name="Tiedje J."/>
            <person name="Richardson P."/>
        </authorList>
    </citation>
    <scope>NUCLEOTIDE SEQUENCE [LARGE SCALE GENOMIC DNA]</scope>
    <source>
        <strain>CN-32 / ATCC BAA-453</strain>
    </source>
</reference>
<dbReference type="EC" id="5.2.1.8" evidence="1"/>
<dbReference type="EMBL" id="CP000681">
    <property type="protein sequence ID" value="ABP75214.1"/>
    <property type="molecule type" value="Genomic_DNA"/>
</dbReference>
<dbReference type="SMR" id="A4Y5I1"/>
<dbReference type="STRING" id="319224.Sputcn32_1489"/>
<dbReference type="KEGG" id="spc:Sputcn32_1489"/>
<dbReference type="eggNOG" id="COG0544">
    <property type="taxonomic scope" value="Bacteria"/>
</dbReference>
<dbReference type="HOGENOM" id="CLU_033058_2_0_6"/>
<dbReference type="GO" id="GO:0005737">
    <property type="term" value="C:cytoplasm"/>
    <property type="evidence" value="ECO:0007669"/>
    <property type="project" value="UniProtKB-SubCell"/>
</dbReference>
<dbReference type="GO" id="GO:0003755">
    <property type="term" value="F:peptidyl-prolyl cis-trans isomerase activity"/>
    <property type="evidence" value="ECO:0007669"/>
    <property type="project" value="UniProtKB-UniRule"/>
</dbReference>
<dbReference type="GO" id="GO:0044183">
    <property type="term" value="F:protein folding chaperone"/>
    <property type="evidence" value="ECO:0007669"/>
    <property type="project" value="TreeGrafter"/>
</dbReference>
<dbReference type="GO" id="GO:0043022">
    <property type="term" value="F:ribosome binding"/>
    <property type="evidence" value="ECO:0007669"/>
    <property type="project" value="TreeGrafter"/>
</dbReference>
<dbReference type="GO" id="GO:0051083">
    <property type="term" value="P:'de novo' cotranslational protein folding"/>
    <property type="evidence" value="ECO:0007669"/>
    <property type="project" value="TreeGrafter"/>
</dbReference>
<dbReference type="GO" id="GO:0051301">
    <property type="term" value="P:cell division"/>
    <property type="evidence" value="ECO:0007669"/>
    <property type="project" value="UniProtKB-KW"/>
</dbReference>
<dbReference type="GO" id="GO:0061077">
    <property type="term" value="P:chaperone-mediated protein folding"/>
    <property type="evidence" value="ECO:0007669"/>
    <property type="project" value="TreeGrafter"/>
</dbReference>
<dbReference type="GO" id="GO:0015031">
    <property type="term" value="P:protein transport"/>
    <property type="evidence" value="ECO:0007669"/>
    <property type="project" value="UniProtKB-UniRule"/>
</dbReference>
<dbReference type="GO" id="GO:0043335">
    <property type="term" value="P:protein unfolding"/>
    <property type="evidence" value="ECO:0007669"/>
    <property type="project" value="TreeGrafter"/>
</dbReference>
<dbReference type="FunFam" id="3.10.50.40:FF:000001">
    <property type="entry name" value="Trigger factor"/>
    <property type="match status" value="1"/>
</dbReference>
<dbReference type="Gene3D" id="3.10.50.40">
    <property type="match status" value="1"/>
</dbReference>
<dbReference type="Gene3D" id="3.30.70.1050">
    <property type="entry name" value="Trigger factor ribosome-binding domain"/>
    <property type="match status" value="1"/>
</dbReference>
<dbReference type="Gene3D" id="1.10.3120.10">
    <property type="entry name" value="Trigger factor, C-terminal domain"/>
    <property type="match status" value="1"/>
</dbReference>
<dbReference type="HAMAP" id="MF_00303">
    <property type="entry name" value="Trigger_factor_Tig"/>
    <property type="match status" value="1"/>
</dbReference>
<dbReference type="InterPro" id="IPR046357">
    <property type="entry name" value="PPIase_dom_sf"/>
</dbReference>
<dbReference type="InterPro" id="IPR001179">
    <property type="entry name" value="PPIase_FKBP_dom"/>
</dbReference>
<dbReference type="InterPro" id="IPR005215">
    <property type="entry name" value="Trig_fac"/>
</dbReference>
<dbReference type="InterPro" id="IPR008880">
    <property type="entry name" value="Trigger_fac_C"/>
</dbReference>
<dbReference type="InterPro" id="IPR037041">
    <property type="entry name" value="Trigger_fac_C_sf"/>
</dbReference>
<dbReference type="InterPro" id="IPR008881">
    <property type="entry name" value="Trigger_fac_ribosome-bd_bac"/>
</dbReference>
<dbReference type="InterPro" id="IPR036611">
    <property type="entry name" value="Trigger_fac_ribosome-bd_sf"/>
</dbReference>
<dbReference type="InterPro" id="IPR027304">
    <property type="entry name" value="Trigger_fact/SurA_dom_sf"/>
</dbReference>
<dbReference type="NCBIfam" id="TIGR00115">
    <property type="entry name" value="tig"/>
    <property type="match status" value="1"/>
</dbReference>
<dbReference type="PANTHER" id="PTHR30560">
    <property type="entry name" value="TRIGGER FACTOR CHAPERONE AND PEPTIDYL-PROLYL CIS/TRANS ISOMERASE"/>
    <property type="match status" value="1"/>
</dbReference>
<dbReference type="PANTHER" id="PTHR30560:SF3">
    <property type="entry name" value="TRIGGER FACTOR-LIKE PROTEIN TIG, CHLOROPLASTIC"/>
    <property type="match status" value="1"/>
</dbReference>
<dbReference type="Pfam" id="PF00254">
    <property type="entry name" value="FKBP_C"/>
    <property type="match status" value="1"/>
</dbReference>
<dbReference type="Pfam" id="PF05698">
    <property type="entry name" value="Trigger_C"/>
    <property type="match status" value="1"/>
</dbReference>
<dbReference type="Pfam" id="PF05697">
    <property type="entry name" value="Trigger_N"/>
    <property type="match status" value="1"/>
</dbReference>
<dbReference type="PIRSF" id="PIRSF003095">
    <property type="entry name" value="Trigger_factor"/>
    <property type="match status" value="1"/>
</dbReference>
<dbReference type="SUPFAM" id="SSF54534">
    <property type="entry name" value="FKBP-like"/>
    <property type="match status" value="1"/>
</dbReference>
<dbReference type="SUPFAM" id="SSF109998">
    <property type="entry name" value="Triger factor/SurA peptide-binding domain-like"/>
    <property type="match status" value="1"/>
</dbReference>
<dbReference type="SUPFAM" id="SSF102735">
    <property type="entry name" value="Trigger factor ribosome-binding domain"/>
    <property type="match status" value="1"/>
</dbReference>
<dbReference type="PROSITE" id="PS50059">
    <property type="entry name" value="FKBP_PPIASE"/>
    <property type="match status" value="1"/>
</dbReference>